<keyword id="KW-0328">Glycosyltransferase</keyword>
<keyword id="KW-0441">Lipid A biosynthesis</keyword>
<keyword id="KW-0444">Lipid biosynthesis</keyword>
<keyword id="KW-0443">Lipid metabolism</keyword>
<keyword id="KW-0808">Transferase</keyword>
<sequence>MSLPTNQLRLAMVAGEPSGDLLAASLLGGLQERLPASTRYYGIGGQRMLAHGFDSHWQMDKLTVRGYVEALGQIPEILRIRGELKRQLLAERPDAFIGVDAPDFNFSVEQAARDAGIPSIHFVCPSIWAWRGGRIKKIAKSVDHMLCLFPFEPAILDKAGVASTYVGHPLADEIPLEPDTHGARIALGLPADGPVIAVLPGSRRSEIGLIGPTFFAAMALMQQREPGVRFVMPAATPALRELLQPLVDAHPQLALTITDGRSQVAMTAADAILVKSGTVTLEAALLKKPMVISYKVPWLTGQIMRRQGYLPYVGLPNILAGRFVVPELLQHFATPEALADATLTQLRDDANRRTLTEVFTEMHLSLRQNTAAKAAEAVVRVLDQRRGRA</sequence>
<accession>B1YS61</accession>
<gene>
    <name evidence="1" type="primary">lpxB</name>
    <name type="ordered locus">BamMC406_1908</name>
</gene>
<name>LPXB_BURA4</name>
<comment type="function">
    <text evidence="1">Condensation of UDP-2,3-diacylglucosamine and 2,3-diacylglucosamine-1-phosphate to form lipid A disaccharide, a precursor of lipid A, a phosphorylated glycolipid that anchors the lipopolysaccharide to the outer membrane of the cell.</text>
</comment>
<comment type="catalytic activity">
    <reaction evidence="1">
        <text>a lipid X + a UDP-2-N,3-O-bis[(3R)-3-hydroxyacyl]-alpha-D-glucosamine = a lipid A disaccharide + UDP + H(+)</text>
        <dbReference type="Rhea" id="RHEA:67828"/>
        <dbReference type="ChEBI" id="CHEBI:15378"/>
        <dbReference type="ChEBI" id="CHEBI:58223"/>
        <dbReference type="ChEBI" id="CHEBI:137748"/>
        <dbReference type="ChEBI" id="CHEBI:176338"/>
        <dbReference type="ChEBI" id="CHEBI:176343"/>
        <dbReference type="EC" id="2.4.1.182"/>
    </reaction>
</comment>
<comment type="pathway">
    <text evidence="1">Bacterial outer membrane biogenesis; LPS lipid A biosynthesis.</text>
</comment>
<comment type="similarity">
    <text evidence="1">Belongs to the LpxB family.</text>
</comment>
<organism>
    <name type="scientific">Burkholderia ambifaria (strain MC40-6)</name>
    <dbReference type="NCBI Taxonomy" id="398577"/>
    <lineage>
        <taxon>Bacteria</taxon>
        <taxon>Pseudomonadati</taxon>
        <taxon>Pseudomonadota</taxon>
        <taxon>Betaproteobacteria</taxon>
        <taxon>Burkholderiales</taxon>
        <taxon>Burkholderiaceae</taxon>
        <taxon>Burkholderia</taxon>
        <taxon>Burkholderia cepacia complex</taxon>
    </lineage>
</organism>
<evidence type="ECO:0000255" key="1">
    <source>
        <dbReference type="HAMAP-Rule" id="MF_00392"/>
    </source>
</evidence>
<protein>
    <recommendedName>
        <fullName evidence="1">Lipid-A-disaccharide synthase</fullName>
        <ecNumber evidence="1">2.4.1.182</ecNumber>
    </recommendedName>
</protein>
<proteinExistence type="inferred from homology"/>
<reference key="1">
    <citation type="submission" date="2008-04" db="EMBL/GenBank/DDBJ databases">
        <title>Complete sequence of chromosome 1 of Burkholderia ambifaria MC40-6.</title>
        <authorList>
            <person name="Copeland A."/>
            <person name="Lucas S."/>
            <person name="Lapidus A."/>
            <person name="Glavina del Rio T."/>
            <person name="Dalin E."/>
            <person name="Tice H."/>
            <person name="Pitluck S."/>
            <person name="Chain P."/>
            <person name="Malfatti S."/>
            <person name="Shin M."/>
            <person name="Vergez L."/>
            <person name="Lang D."/>
            <person name="Schmutz J."/>
            <person name="Larimer F."/>
            <person name="Land M."/>
            <person name="Hauser L."/>
            <person name="Kyrpides N."/>
            <person name="Lykidis A."/>
            <person name="Ramette A."/>
            <person name="Konstantinidis K."/>
            <person name="Tiedje J."/>
            <person name="Richardson P."/>
        </authorList>
    </citation>
    <scope>NUCLEOTIDE SEQUENCE [LARGE SCALE GENOMIC DNA]</scope>
    <source>
        <strain>MC40-6</strain>
    </source>
</reference>
<dbReference type="EC" id="2.4.1.182" evidence="1"/>
<dbReference type="EMBL" id="CP001025">
    <property type="protein sequence ID" value="ACB64390.1"/>
    <property type="molecule type" value="Genomic_DNA"/>
</dbReference>
<dbReference type="RefSeq" id="WP_012364128.1">
    <property type="nucleotide sequence ID" value="NC_010551.1"/>
</dbReference>
<dbReference type="SMR" id="B1YS61"/>
<dbReference type="CAZy" id="GT19">
    <property type="family name" value="Glycosyltransferase Family 19"/>
</dbReference>
<dbReference type="KEGG" id="bac:BamMC406_1908"/>
<dbReference type="HOGENOM" id="CLU_036577_3_0_4"/>
<dbReference type="OrthoDB" id="9801642at2"/>
<dbReference type="UniPathway" id="UPA00973"/>
<dbReference type="Proteomes" id="UP000001680">
    <property type="component" value="Chromosome 1"/>
</dbReference>
<dbReference type="GO" id="GO:0016020">
    <property type="term" value="C:membrane"/>
    <property type="evidence" value="ECO:0007669"/>
    <property type="project" value="GOC"/>
</dbReference>
<dbReference type="GO" id="GO:0008915">
    <property type="term" value="F:lipid-A-disaccharide synthase activity"/>
    <property type="evidence" value="ECO:0007669"/>
    <property type="project" value="UniProtKB-UniRule"/>
</dbReference>
<dbReference type="GO" id="GO:0005543">
    <property type="term" value="F:phospholipid binding"/>
    <property type="evidence" value="ECO:0007669"/>
    <property type="project" value="TreeGrafter"/>
</dbReference>
<dbReference type="GO" id="GO:0009245">
    <property type="term" value="P:lipid A biosynthetic process"/>
    <property type="evidence" value="ECO:0007669"/>
    <property type="project" value="UniProtKB-UniRule"/>
</dbReference>
<dbReference type="HAMAP" id="MF_00392">
    <property type="entry name" value="LpxB"/>
    <property type="match status" value="1"/>
</dbReference>
<dbReference type="InterPro" id="IPR003835">
    <property type="entry name" value="Glyco_trans_19"/>
</dbReference>
<dbReference type="NCBIfam" id="TIGR00215">
    <property type="entry name" value="lpxB"/>
    <property type="match status" value="1"/>
</dbReference>
<dbReference type="PANTHER" id="PTHR30372">
    <property type="entry name" value="LIPID-A-DISACCHARIDE SYNTHASE"/>
    <property type="match status" value="1"/>
</dbReference>
<dbReference type="PANTHER" id="PTHR30372:SF4">
    <property type="entry name" value="LIPID-A-DISACCHARIDE SYNTHASE, MITOCHONDRIAL-RELATED"/>
    <property type="match status" value="1"/>
</dbReference>
<dbReference type="Pfam" id="PF02684">
    <property type="entry name" value="LpxB"/>
    <property type="match status" value="1"/>
</dbReference>
<dbReference type="SUPFAM" id="SSF53756">
    <property type="entry name" value="UDP-Glycosyltransferase/glycogen phosphorylase"/>
    <property type="match status" value="1"/>
</dbReference>
<feature type="chain" id="PRO_1000191463" description="Lipid-A-disaccharide synthase">
    <location>
        <begin position="1"/>
        <end position="389"/>
    </location>
</feature>